<proteinExistence type="inferred from homology"/>
<sequence>MNKTKGFTKYKKMRYIPGLDGLRAIAVLGIIIYHLNKQWLTGGFLGVDTFFVISGYLITSLLLKEYDDTGIIKLKSFWIRRLKRLLPAVIVLLMVVGTATLLLKSDNIIRVKHDIIAAIFYVSNWWYIAKDVNYFEQFSFMPLKHLWSLAIEEQFYIFFPVILVTLLLTIKKRYKIGFIFWGVSIISLGLMMFIYSINGDHSRVYFGTDTRLQTLLLGVILAFLWPPFKLKNDPPKVVKYVIDSIGSLSFIVLILLFFIINDETNWIYDGGFYLISILTLFIIASVVHPSTWIAKIFSNPVLVFIGKRSYSLYLWHFAVISFVHSYYVDGQIPVYVYFIDISLTIIFAELSYRFIETPFRKEGIKALNWRPSYIPQFIRMAIVVTLLIPFMLILVGAFNKYGKDIIGEKANSFDTTIEDNYLMRIAPIDNIHIDGLVSEKKKESSDVYNNIKPLLIGDSVMVDIGESFKSSVPKSRIDGKVGRQLYQTLPLVKANYSQYKKSSDQVVLELGTNGDFTVKQLDDLLNQFGKAKIYLVNTRVPRIYEANVNRLLADAAKRKSNVTLIDWYKRSQGHSEYFAPDGVHLEYKGVLALKDEILKALKKK</sequence>
<protein>
    <recommendedName>
        <fullName>Putative O-acetyltransferase SACOL0978</fullName>
        <ecNumber>2.3.1.-</ecNumber>
    </recommendedName>
</protein>
<dbReference type="EC" id="2.3.1.-"/>
<dbReference type="EMBL" id="CP000046">
    <property type="protein sequence ID" value="AAW37945.1"/>
    <property type="molecule type" value="Genomic_DNA"/>
</dbReference>
<dbReference type="RefSeq" id="WP_001044214.1">
    <property type="nucleotide sequence ID" value="NZ_JBGOFO010000002.1"/>
</dbReference>
<dbReference type="SMR" id="Q5HHB1"/>
<dbReference type="KEGG" id="sac:SACOL0978"/>
<dbReference type="HOGENOM" id="CLU_005679_11_2_9"/>
<dbReference type="Proteomes" id="UP000000530">
    <property type="component" value="Chromosome"/>
</dbReference>
<dbReference type="GO" id="GO:0005886">
    <property type="term" value="C:plasma membrane"/>
    <property type="evidence" value="ECO:0007669"/>
    <property type="project" value="UniProtKB-SubCell"/>
</dbReference>
<dbReference type="GO" id="GO:0016747">
    <property type="term" value="F:acyltransferase activity, transferring groups other than amino-acyl groups"/>
    <property type="evidence" value="ECO:0007669"/>
    <property type="project" value="InterPro"/>
</dbReference>
<dbReference type="GO" id="GO:0009103">
    <property type="term" value="P:lipopolysaccharide biosynthetic process"/>
    <property type="evidence" value="ECO:0007669"/>
    <property type="project" value="TreeGrafter"/>
</dbReference>
<dbReference type="CDD" id="cd01840">
    <property type="entry name" value="SGNH_hydrolase_yrhL_like"/>
    <property type="match status" value="1"/>
</dbReference>
<dbReference type="FunFam" id="3.40.50.1110:FF:000006">
    <property type="entry name" value="O-acetyltransferase OatA"/>
    <property type="match status" value="1"/>
</dbReference>
<dbReference type="Gene3D" id="3.40.50.1110">
    <property type="entry name" value="SGNH hydrolase"/>
    <property type="match status" value="1"/>
</dbReference>
<dbReference type="InterPro" id="IPR002656">
    <property type="entry name" value="Acyl_transf_3_dom"/>
</dbReference>
<dbReference type="InterPro" id="IPR050879">
    <property type="entry name" value="Acyltransferase_3"/>
</dbReference>
<dbReference type="InterPro" id="IPR036514">
    <property type="entry name" value="SGNH_hydro_sf"/>
</dbReference>
<dbReference type="PANTHER" id="PTHR23028">
    <property type="entry name" value="ACETYLTRANSFERASE"/>
    <property type="match status" value="1"/>
</dbReference>
<dbReference type="PANTHER" id="PTHR23028:SF53">
    <property type="entry name" value="ACYL_TRANSF_3 DOMAIN-CONTAINING PROTEIN"/>
    <property type="match status" value="1"/>
</dbReference>
<dbReference type="Pfam" id="PF01757">
    <property type="entry name" value="Acyl_transf_3"/>
    <property type="match status" value="1"/>
</dbReference>
<dbReference type="SUPFAM" id="SSF52266">
    <property type="entry name" value="SGNH hydrolase"/>
    <property type="match status" value="1"/>
</dbReference>
<name>OTRF1_STAAC</name>
<gene>
    <name type="ordered locus">SACOL0978</name>
</gene>
<evidence type="ECO:0000250" key="1">
    <source>
        <dbReference type="UniProtKB" id="Q2FV54"/>
    </source>
</evidence>
<evidence type="ECO:0000255" key="2"/>
<evidence type="ECO:0000305" key="3"/>
<reference key="1">
    <citation type="journal article" date="2005" name="J. Bacteriol.">
        <title>Insights on evolution of virulence and resistance from the complete genome analysis of an early methicillin-resistant Staphylococcus aureus strain and a biofilm-producing methicillin-resistant Staphylococcus epidermidis strain.</title>
        <authorList>
            <person name="Gill S.R."/>
            <person name="Fouts D.E."/>
            <person name="Archer G.L."/>
            <person name="Mongodin E.F."/>
            <person name="DeBoy R.T."/>
            <person name="Ravel J."/>
            <person name="Paulsen I.T."/>
            <person name="Kolonay J.F."/>
            <person name="Brinkac L.M."/>
            <person name="Beanan M.J."/>
            <person name="Dodson R.J."/>
            <person name="Daugherty S.C."/>
            <person name="Madupu R."/>
            <person name="Angiuoli S.V."/>
            <person name="Durkin A.S."/>
            <person name="Haft D.H."/>
            <person name="Vamathevan J.J."/>
            <person name="Khouri H."/>
            <person name="Utterback T.R."/>
            <person name="Lee C."/>
            <person name="Dimitrov G."/>
            <person name="Jiang L."/>
            <person name="Qin H."/>
            <person name="Weidman J."/>
            <person name="Tran K."/>
            <person name="Kang K.H."/>
            <person name="Hance I.R."/>
            <person name="Nelson K.E."/>
            <person name="Fraser C.M."/>
        </authorList>
    </citation>
    <scope>NUCLEOTIDE SEQUENCE [LARGE SCALE GENOMIC DNA]</scope>
    <source>
        <strain>COL</strain>
    </source>
</reference>
<organism>
    <name type="scientific">Staphylococcus aureus (strain COL)</name>
    <dbReference type="NCBI Taxonomy" id="93062"/>
    <lineage>
        <taxon>Bacteria</taxon>
        <taxon>Bacillati</taxon>
        <taxon>Bacillota</taxon>
        <taxon>Bacilli</taxon>
        <taxon>Bacillales</taxon>
        <taxon>Staphylococcaceae</taxon>
        <taxon>Staphylococcus</taxon>
    </lineage>
</organism>
<keyword id="KW-0012">Acyltransferase</keyword>
<keyword id="KW-1003">Cell membrane</keyword>
<keyword id="KW-0472">Membrane</keyword>
<keyword id="KW-0808">Transferase</keyword>
<keyword id="KW-0812">Transmembrane</keyword>
<keyword id="KW-1133">Transmembrane helix</keyword>
<accession>Q5HHB1</accession>
<comment type="subcellular location">
    <subcellularLocation>
        <location evidence="3">Cell membrane</location>
        <topology evidence="3">Multi-pass membrane protein</topology>
    </subcellularLocation>
</comment>
<comment type="similarity">
    <text evidence="3">Belongs to the acyltransferase 3 family.</text>
</comment>
<feature type="chain" id="PRO_0000208091" description="Putative O-acetyltransferase SACOL0978">
    <location>
        <begin position="1"/>
        <end position="604"/>
    </location>
</feature>
<feature type="transmembrane region" description="Helical" evidence="2">
    <location>
        <begin position="15"/>
        <end position="35"/>
    </location>
</feature>
<feature type="transmembrane region" description="Helical" evidence="2">
    <location>
        <begin position="43"/>
        <end position="63"/>
    </location>
</feature>
<feature type="transmembrane region" description="Helical" evidence="2">
    <location>
        <begin position="85"/>
        <end position="105"/>
    </location>
</feature>
<feature type="transmembrane region" description="Helical" evidence="2">
    <location>
        <begin position="150"/>
        <end position="170"/>
    </location>
</feature>
<feature type="transmembrane region" description="Helical" evidence="2">
    <location>
        <begin position="176"/>
        <end position="196"/>
    </location>
</feature>
<feature type="transmembrane region" description="Helical" evidence="2">
    <location>
        <begin position="212"/>
        <end position="232"/>
    </location>
</feature>
<feature type="transmembrane region" description="Helical" evidence="2">
    <location>
        <begin position="240"/>
        <end position="260"/>
    </location>
</feature>
<feature type="transmembrane region" description="Helical" evidence="2">
    <location>
        <begin position="267"/>
        <end position="287"/>
    </location>
</feature>
<feature type="transmembrane region" description="Helical" evidence="2">
    <location>
        <begin position="310"/>
        <end position="330"/>
    </location>
</feature>
<feature type="transmembrane region" description="Helical" evidence="2">
    <location>
        <begin position="332"/>
        <end position="352"/>
    </location>
</feature>
<feature type="transmembrane region" description="Helical" evidence="2">
    <location>
        <begin position="377"/>
        <end position="397"/>
    </location>
</feature>
<feature type="active site" evidence="1">
    <location>
        <position position="459"/>
    </location>
</feature>
<feature type="active site" evidence="1">
    <location>
        <position position="581"/>
    </location>
</feature>
<feature type="active site" evidence="1">
    <location>
        <position position="584"/>
    </location>
</feature>